<accession>Q92L66</accession>
<dbReference type="EC" id="4.2.1.96" evidence="1"/>
<dbReference type="EMBL" id="AL591688">
    <property type="protein sequence ID" value="CAC47796.1"/>
    <property type="molecule type" value="Genomic_DNA"/>
</dbReference>
<dbReference type="RefSeq" id="NP_387323.1">
    <property type="nucleotide sequence ID" value="NC_003047.1"/>
</dbReference>
<dbReference type="RefSeq" id="WP_010970501.1">
    <property type="nucleotide sequence ID" value="NC_003047.1"/>
</dbReference>
<dbReference type="SMR" id="Q92L66"/>
<dbReference type="EnsemblBacteria" id="CAC47796">
    <property type="protein sequence ID" value="CAC47796"/>
    <property type="gene ID" value="SMc03834"/>
</dbReference>
<dbReference type="KEGG" id="sme:SMc03834"/>
<dbReference type="PATRIC" id="fig|266834.11.peg.4769"/>
<dbReference type="eggNOG" id="COG2154">
    <property type="taxonomic scope" value="Bacteria"/>
</dbReference>
<dbReference type="HOGENOM" id="CLU_081974_3_2_5"/>
<dbReference type="OrthoDB" id="9794987at2"/>
<dbReference type="Proteomes" id="UP000001976">
    <property type="component" value="Chromosome"/>
</dbReference>
<dbReference type="GO" id="GO:0008124">
    <property type="term" value="F:4-alpha-hydroxytetrahydrobiopterin dehydratase activity"/>
    <property type="evidence" value="ECO:0007669"/>
    <property type="project" value="UniProtKB-UniRule"/>
</dbReference>
<dbReference type="GO" id="GO:0006729">
    <property type="term" value="P:tetrahydrobiopterin biosynthetic process"/>
    <property type="evidence" value="ECO:0007669"/>
    <property type="project" value="InterPro"/>
</dbReference>
<dbReference type="CDD" id="cd00914">
    <property type="entry name" value="PCD_DCoH_subfamily_b"/>
    <property type="match status" value="1"/>
</dbReference>
<dbReference type="Gene3D" id="3.30.1360.20">
    <property type="entry name" value="Transcriptional coactivator/pterin dehydratase"/>
    <property type="match status" value="1"/>
</dbReference>
<dbReference type="HAMAP" id="MF_00434">
    <property type="entry name" value="Pterin_4_alpha"/>
    <property type="match status" value="1"/>
</dbReference>
<dbReference type="InterPro" id="IPR036428">
    <property type="entry name" value="PCD_sf"/>
</dbReference>
<dbReference type="InterPro" id="IPR001533">
    <property type="entry name" value="Pterin_deHydtase"/>
</dbReference>
<dbReference type="NCBIfam" id="NF002017">
    <property type="entry name" value="PRK00823.1-2"/>
    <property type="match status" value="1"/>
</dbReference>
<dbReference type="NCBIfam" id="NF002018">
    <property type="entry name" value="PRK00823.1-3"/>
    <property type="match status" value="1"/>
</dbReference>
<dbReference type="PANTHER" id="PTHR12599">
    <property type="entry name" value="PTERIN-4-ALPHA-CARBINOLAMINE DEHYDRATASE"/>
    <property type="match status" value="1"/>
</dbReference>
<dbReference type="PANTHER" id="PTHR12599:SF0">
    <property type="entry name" value="PTERIN-4-ALPHA-CARBINOLAMINE DEHYDRATASE"/>
    <property type="match status" value="1"/>
</dbReference>
<dbReference type="Pfam" id="PF01329">
    <property type="entry name" value="Pterin_4a"/>
    <property type="match status" value="1"/>
</dbReference>
<dbReference type="SUPFAM" id="SSF55248">
    <property type="entry name" value="PCD-like"/>
    <property type="match status" value="1"/>
</dbReference>
<feature type="chain" id="PRO_0000063093" description="Putative pterin-4-alpha-carbinolamine dehydratase">
    <location>
        <begin position="1"/>
        <end position="104"/>
    </location>
</feature>
<organism>
    <name type="scientific">Rhizobium meliloti (strain 1021)</name>
    <name type="common">Ensifer meliloti</name>
    <name type="synonym">Sinorhizobium meliloti</name>
    <dbReference type="NCBI Taxonomy" id="266834"/>
    <lineage>
        <taxon>Bacteria</taxon>
        <taxon>Pseudomonadati</taxon>
        <taxon>Pseudomonadota</taxon>
        <taxon>Alphaproteobacteria</taxon>
        <taxon>Hyphomicrobiales</taxon>
        <taxon>Rhizobiaceae</taxon>
        <taxon>Sinorhizobium/Ensifer group</taxon>
        <taxon>Sinorhizobium</taxon>
    </lineage>
</organism>
<comment type="catalytic activity">
    <reaction evidence="1">
        <text>(4aS,6R)-4a-hydroxy-L-erythro-5,6,7,8-tetrahydrobiopterin = (6R)-L-erythro-6,7-dihydrobiopterin + H2O</text>
        <dbReference type="Rhea" id="RHEA:11920"/>
        <dbReference type="ChEBI" id="CHEBI:15377"/>
        <dbReference type="ChEBI" id="CHEBI:15642"/>
        <dbReference type="ChEBI" id="CHEBI:43120"/>
        <dbReference type="EC" id="4.2.1.96"/>
    </reaction>
</comment>
<comment type="similarity">
    <text evidence="1">Belongs to the pterin-4-alpha-carbinolamine dehydratase family.</text>
</comment>
<proteinExistence type="inferred from homology"/>
<gene>
    <name type="primary">pcbD</name>
    <name type="ordered locus">R03217</name>
    <name type="ORF">SMc03834</name>
</gene>
<reference key="1">
    <citation type="journal article" date="2001" name="Proc. Natl. Acad. Sci. U.S.A.">
        <title>Analysis of the chromosome sequence of the legume symbiont Sinorhizobium meliloti strain 1021.</title>
        <authorList>
            <person name="Capela D."/>
            <person name="Barloy-Hubler F."/>
            <person name="Gouzy J."/>
            <person name="Bothe G."/>
            <person name="Ampe F."/>
            <person name="Batut J."/>
            <person name="Boistard P."/>
            <person name="Becker A."/>
            <person name="Boutry M."/>
            <person name="Cadieu E."/>
            <person name="Dreano S."/>
            <person name="Gloux S."/>
            <person name="Godrie T."/>
            <person name="Goffeau A."/>
            <person name="Kahn D."/>
            <person name="Kiss E."/>
            <person name="Lelaure V."/>
            <person name="Masuy D."/>
            <person name="Pohl T."/>
            <person name="Portetelle D."/>
            <person name="Puehler A."/>
            <person name="Purnelle B."/>
            <person name="Ramsperger U."/>
            <person name="Renard C."/>
            <person name="Thebault P."/>
            <person name="Vandenbol M."/>
            <person name="Weidner S."/>
            <person name="Galibert F."/>
        </authorList>
    </citation>
    <scope>NUCLEOTIDE SEQUENCE [LARGE SCALE GENOMIC DNA]</scope>
    <source>
        <strain>1021</strain>
    </source>
</reference>
<reference key="2">
    <citation type="journal article" date="2001" name="Science">
        <title>The composite genome of the legume symbiont Sinorhizobium meliloti.</title>
        <authorList>
            <person name="Galibert F."/>
            <person name="Finan T.M."/>
            <person name="Long S.R."/>
            <person name="Puehler A."/>
            <person name="Abola P."/>
            <person name="Ampe F."/>
            <person name="Barloy-Hubler F."/>
            <person name="Barnett M.J."/>
            <person name="Becker A."/>
            <person name="Boistard P."/>
            <person name="Bothe G."/>
            <person name="Boutry M."/>
            <person name="Bowser L."/>
            <person name="Buhrmester J."/>
            <person name="Cadieu E."/>
            <person name="Capela D."/>
            <person name="Chain P."/>
            <person name="Cowie A."/>
            <person name="Davis R.W."/>
            <person name="Dreano S."/>
            <person name="Federspiel N.A."/>
            <person name="Fisher R.F."/>
            <person name="Gloux S."/>
            <person name="Godrie T."/>
            <person name="Goffeau A."/>
            <person name="Golding B."/>
            <person name="Gouzy J."/>
            <person name="Gurjal M."/>
            <person name="Hernandez-Lucas I."/>
            <person name="Hong A."/>
            <person name="Huizar L."/>
            <person name="Hyman R.W."/>
            <person name="Jones T."/>
            <person name="Kahn D."/>
            <person name="Kahn M.L."/>
            <person name="Kalman S."/>
            <person name="Keating D.H."/>
            <person name="Kiss E."/>
            <person name="Komp C."/>
            <person name="Lelaure V."/>
            <person name="Masuy D."/>
            <person name="Palm C."/>
            <person name="Peck M.C."/>
            <person name="Pohl T.M."/>
            <person name="Portetelle D."/>
            <person name="Purnelle B."/>
            <person name="Ramsperger U."/>
            <person name="Surzycki R."/>
            <person name="Thebault P."/>
            <person name="Vandenbol M."/>
            <person name="Vorhoelter F.J."/>
            <person name="Weidner S."/>
            <person name="Wells D.H."/>
            <person name="Wong K."/>
            <person name="Yeh K.-C."/>
            <person name="Batut J."/>
        </authorList>
    </citation>
    <scope>NUCLEOTIDE SEQUENCE [LARGE SCALE GENOMIC DNA]</scope>
    <source>
        <strain>1021</strain>
    </source>
</reference>
<evidence type="ECO:0000255" key="1">
    <source>
        <dbReference type="HAMAP-Rule" id="MF_00434"/>
    </source>
</evidence>
<sequence>MRPEKLDAAAIAEHLHKMEGWVLAEDGGSIWKTFRFKTFAEAFTFMTQCAFAAEKLNHHPEWFNVYNKVDVTLSTHDADGLTELDFKLAAKMDQAAEGRMPDHM</sequence>
<protein>
    <recommendedName>
        <fullName evidence="1">Putative pterin-4-alpha-carbinolamine dehydratase</fullName>
        <shortName evidence="1">PHS</shortName>
        <ecNumber evidence="1">4.2.1.96</ecNumber>
    </recommendedName>
    <alternativeName>
        <fullName evidence="1">4-alpha-hydroxy-tetrahydropterin dehydratase</fullName>
    </alternativeName>
    <alternativeName>
        <fullName evidence="1">Pterin carbinolamine dehydratase</fullName>
        <shortName evidence="1">PCD</shortName>
    </alternativeName>
</protein>
<name>PHS_RHIME</name>
<keyword id="KW-0456">Lyase</keyword>
<keyword id="KW-1185">Reference proteome</keyword>